<keyword id="KW-0963">Cytoplasm</keyword>
<keyword id="KW-0227">DNA damage</keyword>
<keyword id="KW-0233">DNA recombination</keyword>
<keyword id="KW-0234">DNA repair</keyword>
<keyword id="KW-0238">DNA-binding</keyword>
<keyword id="KW-1185">Reference proteome</keyword>
<feature type="chain" id="PRO_1000002496" description="Holliday junction branch migration complex subunit RuvA">
    <location>
        <begin position="1"/>
        <end position="202"/>
    </location>
</feature>
<feature type="region of interest" description="Domain I" evidence="1">
    <location>
        <begin position="1"/>
        <end position="64"/>
    </location>
</feature>
<feature type="region of interest" description="Domain II" evidence="1">
    <location>
        <begin position="65"/>
        <end position="143"/>
    </location>
</feature>
<feature type="region of interest" description="Flexible linker" evidence="1">
    <location>
        <begin position="143"/>
        <end position="147"/>
    </location>
</feature>
<feature type="region of interest" description="Domain III" evidence="1">
    <location>
        <begin position="148"/>
        <end position="202"/>
    </location>
</feature>
<organism>
    <name type="scientific">Myxococcus xanthus (strain DK1622)</name>
    <dbReference type="NCBI Taxonomy" id="246197"/>
    <lineage>
        <taxon>Bacteria</taxon>
        <taxon>Pseudomonadati</taxon>
        <taxon>Myxococcota</taxon>
        <taxon>Myxococcia</taxon>
        <taxon>Myxococcales</taxon>
        <taxon>Cystobacterineae</taxon>
        <taxon>Myxococcaceae</taxon>
        <taxon>Myxococcus</taxon>
    </lineage>
</organism>
<accession>Q1D2J5</accession>
<comment type="function">
    <text evidence="1">The RuvA-RuvB-RuvC complex processes Holliday junction (HJ) DNA during genetic recombination and DNA repair, while the RuvA-RuvB complex plays an important role in the rescue of blocked DNA replication forks via replication fork reversal (RFR). RuvA specifically binds to HJ cruciform DNA, conferring on it an open structure. The RuvB hexamer acts as an ATP-dependent pump, pulling dsDNA into and through the RuvAB complex. HJ branch migration allows RuvC to scan DNA until it finds its consensus sequence, where it cleaves and resolves the cruciform DNA.</text>
</comment>
<comment type="subunit">
    <text evidence="1">Homotetramer. Forms an RuvA(8)-RuvB(12)-Holliday junction (HJ) complex. HJ DNA is sandwiched between 2 RuvA tetramers; dsDNA enters through RuvA and exits via RuvB. An RuvB hexamer assembles on each DNA strand where it exits the tetramer. Each RuvB hexamer is contacted by two RuvA subunits (via domain III) on 2 adjacent RuvB subunits; this complex drives branch migration. In the full resolvosome a probable DNA-RuvA(4)-RuvB(12)-RuvC(2) complex forms which resolves the HJ.</text>
</comment>
<comment type="subcellular location">
    <subcellularLocation>
        <location evidence="1">Cytoplasm</location>
    </subcellularLocation>
</comment>
<comment type="domain">
    <text evidence="1">Has three domains with a flexible linker between the domains II and III and assumes an 'L' shape. Domain III is highly mobile and contacts RuvB.</text>
</comment>
<comment type="similarity">
    <text evidence="1">Belongs to the RuvA family.</text>
</comment>
<evidence type="ECO:0000255" key="1">
    <source>
        <dbReference type="HAMAP-Rule" id="MF_00031"/>
    </source>
</evidence>
<gene>
    <name evidence="1" type="primary">ruvA</name>
    <name type="ordered locus">MXAN_4972</name>
</gene>
<protein>
    <recommendedName>
        <fullName evidence="1">Holliday junction branch migration complex subunit RuvA</fullName>
    </recommendedName>
</protein>
<proteinExistence type="inferred from homology"/>
<name>RUVA_MYXXD</name>
<reference key="1">
    <citation type="journal article" date="2006" name="Proc. Natl. Acad. Sci. U.S.A.">
        <title>Evolution of sensory complexity recorded in a myxobacterial genome.</title>
        <authorList>
            <person name="Goldman B.S."/>
            <person name="Nierman W.C."/>
            <person name="Kaiser D."/>
            <person name="Slater S.C."/>
            <person name="Durkin A.S."/>
            <person name="Eisen J.A."/>
            <person name="Ronning C.M."/>
            <person name="Barbazuk W.B."/>
            <person name="Blanchard M."/>
            <person name="Field C."/>
            <person name="Halling C."/>
            <person name="Hinkle G."/>
            <person name="Iartchuk O."/>
            <person name="Kim H.S."/>
            <person name="Mackenzie C."/>
            <person name="Madupu R."/>
            <person name="Miller N."/>
            <person name="Shvartsbeyn A."/>
            <person name="Sullivan S.A."/>
            <person name="Vaudin M."/>
            <person name="Wiegand R."/>
            <person name="Kaplan H.B."/>
        </authorList>
    </citation>
    <scope>NUCLEOTIDE SEQUENCE [LARGE SCALE GENOMIC DNA]</scope>
    <source>
        <strain>DK1622</strain>
    </source>
</reference>
<sequence>MISRLRGTVLEKDLEDATIDVGGVGYRVNFSSLALGKLPAEGQPVDVRVRTVVREDAFDLFGFLTKGEEEVFLLLNSVSRVGPRLSLMVLSGMEVPELVAALSRGEVARLAKIHGVGKKTAERLVLELKDKVKTIHLEAVSRGTAPAAVSGAHADLVSALLNLGYKQPQAEKAADLASERLGAEATFQALFREALKALRSGG</sequence>
<dbReference type="EMBL" id="CP000113">
    <property type="protein sequence ID" value="ABF91402.1"/>
    <property type="molecule type" value="Genomic_DNA"/>
</dbReference>
<dbReference type="RefSeq" id="WP_011554950.1">
    <property type="nucleotide sequence ID" value="NC_008095.1"/>
</dbReference>
<dbReference type="SMR" id="Q1D2J5"/>
<dbReference type="STRING" id="246197.MXAN_4972"/>
<dbReference type="EnsemblBacteria" id="ABF91402">
    <property type="protein sequence ID" value="ABF91402"/>
    <property type="gene ID" value="MXAN_4972"/>
</dbReference>
<dbReference type="GeneID" id="41362257"/>
<dbReference type="KEGG" id="mxa:MXAN_4972"/>
<dbReference type="eggNOG" id="COG0632">
    <property type="taxonomic scope" value="Bacteria"/>
</dbReference>
<dbReference type="HOGENOM" id="CLU_087936_0_0_7"/>
<dbReference type="OrthoDB" id="5293449at2"/>
<dbReference type="Proteomes" id="UP000002402">
    <property type="component" value="Chromosome"/>
</dbReference>
<dbReference type="GO" id="GO:0005737">
    <property type="term" value="C:cytoplasm"/>
    <property type="evidence" value="ECO:0007669"/>
    <property type="project" value="UniProtKB-SubCell"/>
</dbReference>
<dbReference type="GO" id="GO:0009379">
    <property type="term" value="C:Holliday junction helicase complex"/>
    <property type="evidence" value="ECO:0007669"/>
    <property type="project" value="InterPro"/>
</dbReference>
<dbReference type="GO" id="GO:0048476">
    <property type="term" value="C:Holliday junction resolvase complex"/>
    <property type="evidence" value="ECO:0007669"/>
    <property type="project" value="UniProtKB-UniRule"/>
</dbReference>
<dbReference type="GO" id="GO:0005524">
    <property type="term" value="F:ATP binding"/>
    <property type="evidence" value="ECO:0007669"/>
    <property type="project" value="InterPro"/>
</dbReference>
<dbReference type="GO" id="GO:0000400">
    <property type="term" value="F:four-way junction DNA binding"/>
    <property type="evidence" value="ECO:0007669"/>
    <property type="project" value="UniProtKB-UniRule"/>
</dbReference>
<dbReference type="GO" id="GO:0009378">
    <property type="term" value="F:four-way junction helicase activity"/>
    <property type="evidence" value="ECO:0007669"/>
    <property type="project" value="InterPro"/>
</dbReference>
<dbReference type="GO" id="GO:0006310">
    <property type="term" value="P:DNA recombination"/>
    <property type="evidence" value="ECO:0007669"/>
    <property type="project" value="UniProtKB-UniRule"/>
</dbReference>
<dbReference type="GO" id="GO:0006281">
    <property type="term" value="P:DNA repair"/>
    <property type="evidence" value="ECO:0007669"/>
    <property type="project" value="UniProtKB-UniRule"/>
</dbReference>
<dbReference type="CDD" id="cd14332">
    <property type="entry name" value="UBA_RuvA_C"/>
    <property type="match status" value="1"/>
</dbReference>
<dbReference type="Gene3D" id="1.10.150.20">
    <property type="entry name" value="5' to 3' exonuclease, C-terminal subdomain"/>
    <property type="match status" value="1"/>
</dbReference>
<dbReference type="Gene3D" id="1.10.8.10">
    <property type="entry name" value="DNA helicase RuvA subunit, C-terminal domain"/>
    <property type="match status" value="1"/>
</dbReference>
<dbReference type="Gene3D" id="2.40.50.140">
    <property type="entry name" value="Nucleic acid-binding proteins"/>
    <property type="match status" value="1"/>
</dbReference>
<dbReference type="HAMAP" id="MF_00031">
    <property type="entry name" value="DNA_HJ_migration_RuvA"/>
    <property type="match status" value="1"/>
</dbReference>
<dbReference type="InterPro" id="IPR013849">
    <property type="entry name" value="DNA_helicase_Holl-junc_RuvA_I"/>
</dbReference>
<dbReference type="InterPro" id="IPR012340">
    <property type="entry name" value="NA-bd_OB-fold"/>
</dbReference>
<dbReference type="InterPro" id="IPR000085">
    <property type="entry name" value="RuvA"/>
</dbReference>
<dbReference type="InterPro" id="IPR010994">
    <property type="entry name" value="RuvA_2-like"/>
</dbReference>
<dbReference type="InterPro" id="IPR011114">
    <property type="entry name" value="RuvA_C"/>
</dbReference>
<dbReference type="InterPro" id="IPR036267">
    <property type="entry name" value="RuvA_C_sf"/>
</dbReference>
<dbReference type="NCBIfam" id="TIGR00084">
    <property type="entry name" value="ruvA"/>
    <property type="match status" value="1"/>
</dbReference>
<dbReference type="Pfam" id="PF14520">
    <property type="entry name" value="HHH_5"/>
    <property type="match status" value="1"/>
</dbReference>
<dbReference type="Pfam" id="PF07499">
    <property type="entry name" value="RuvA_C"/>
    <property type="match status" value="1"/>
</dbReference>
<dbReference type="Pfam" id="PF01330">
    <property type="entry name" value="RuvA_N"/>
    <property type="match status" value="1"/>
</dbReference>
<dbReference type="SUPFAM" id="SSF46929">
    <property type="entry name" value="DNA helicase RuvA subunit, C-terminal domain"/>
    <property type="match status" value="1"/>
</dbReference>
<dbReference type="SUPFAM" id="SSF50249">
    <property type="entry name" value="Nucleic acid-binding proteins"/>
    <property type="match status" value="1"/>
</dbReference>
<dbReference type="SUPFAM" id="SSF47781">
    <property type="entry name" value="RuvA domain 2-like"/>
    <property type="match status" value="1"/>
</dbReference>